<protein>
    <recommendedName>
        <fullName evidence="1">Translation initiation factor IF-3</fullName>
    </recommendedName>
</protein>
<name>IF3_AZOC5</name>
<sequence>MRPVAPEKDGPRVNEEIRIREVQLIDQDGQNRGVLPTRDALLLAQEAGLDLVEISPNSSPPVCKILDFGRFKYQNQKKASEARKKQKVVEVKEIKLRPGIDTHDYDVKMKAMLRFFEEGDKVKVTLRFRGREMAHQDIGYKLLQKLKEDVTNIAKVEAEPMLEGRQMIMILAPR</sequence>
<reference key="1">
    <citation type="submission" date="2007-04" db="EMBL/GenBank/DDBJ databases">
        <title>Complete genome sequence of the nitrogen-fixing bacterium Azorhizobium caulinodans ORS571.</title>
        <authorList>
            <person name="Lee K.B."/>
            <person name="Backer P.D."/>
            <person name="Aono T."/>
            <person name="Liu C.T."/>
            <person name="Suzuki S."/>
            <person name="Suzuki T."/>
            <person name="Kaneko T."/>
            <person name="Yamada M."/>
            <person name="Tabata S."/>
            <person name="Kupfer D.M."/>
            <person name="Najar F.Z."/>
            <person name="Wiley G.B."/>
            <person name="Roe B."/>
            <person name="Binnewies T."/>
            <person name="Ussery D."/>
            <person name="Vereecke D."/>
            <person name="Gevers D."/>
            <person name="Holsters M."/>
            <person name="Oyaizu H."/>
        </authorList>
    </citation>
    <scope>NUCLEOTIDE SEQUENCE [LARGE SCALE GENOMIC DNA]</scope>
    <source>
        <strain>ATCC 43989 / DSM 5975 / JCM 20966 / LMG 6465 / NBRC 14845 / NCIMB 13405 / ORS 571</strain>
    </source>
</reference>
<proteinExistence type="inferred from homology"/>
<accession>A8HWL0</accession>
<feature type="chain" id="PRO_1000071208" description="Translation initiation factor IF-3">
    <location>
        <begin position="1"/>
        <end position="174"/>
    </location>
</feature>
<keyword id="KW-0963">Cytoplasm</keyword>
<keyword id="KW-0396">Initiation factor</keyword>
<keyword id="KW-0648">Protein biosynthesis</keyword>
<keyword id="KW-1185">Reference proteome</keyword>
<organism>
    <name type="scientific">Azorhizobium caulinodans (strain ATCC 43989 / DSM 5975 / JCM 20966 / LMG 6465 / NBRC 14845 / NCIMB 13405 / ORS 571)</name>
    <dbReference type="NCBI Taxonomy" id="438753"/>
    <lineage>
        <taxon>Bacteria</taxon>
        <taxon>Pseudomonadati</taxon>
        <taxon>Pseudomonadota</taxon>
        <taxon>Alphaproteobacteria</taxon>
        <taxon>Hyphomicrobiales</taxon>
        <taxon>Xanthobacteraceae</taxon>
        <taxon>Azorhizobium</taxon>
    </lineage>
</organism>
<evidence type="ECO:0000255" key="1">
    <source>
        <dbReference type="HAMAP-Rule" id="MF_00080"/>
    </source>
</evidence>
<dbReference type="EMBL" id="AP009384">
    <property type="protein sequence ID" value="BAF90442.1"/>
    <property type="molecule type" value="Genomic_DNA"/>
</dbReference>
<dbReference type="RefSeq" id="WP_012172963.1">
    <property type="nucleotide sequence ID" value="NC_009937.1"/>
</dbReference>
<dbReference type="SMR" id="A8HWL0"/>
<dbReference type="STRING" id="438753.AZC_4444"/>
<dbReference type="KEGG" id="azc:AZC_4444"/>
<dbReference type="eggNOG" id="COG0290">
    <property type="taxonomic scope" value="Bacteria"/>
</dbReference>
<dbReference type="HOGENOM" id="CLU_054919_3_2_5"/>
<dbReference type="Proteomes" id="UP000000270">
    <property type="component" value="Chromosome"/>
</dbReference>
<dbReference type="GO" id="GO:0005829">
    <property type="term" value="C:cytosol"/>
    <property type="evidence" value="ECO:0007669"/>
    <property type="project" value="TreeGrafter"/>
</dbReference>
<dbReference type="GO" id="GO:0016020">
    <property type="term" value="C:membrane"/>
    <property type="evidence" value="ECO:0007669"/>
    <property type="project" value="TreeGrafter"/>
</dbReference>
<dbReference type="GO" id="GO:0043022">
    <property type="term" value="F:ribosome binding"/>
    <property type="evidence" value="ECO:0007669"/>
    <property type="project" value="TreeGrafter"/>
</dbReference>
<dbReference type="GO" id="GO:0003743">
    <property type="term" value="F:translation initiation factor activity"/>
    <property type="evidence" value="ECO:0007669"/>
    <property type="project" value="UniProtKB-UniRule"/>
</dbReference>
<dbReference type="GO" id="GO:0032790">
    <property type="term" value="P:ribosome disassembly"/>
    <property type="evidence" value="ECO:0007669"/>
    <property type="project" value="TreeGrafter"/>
</dbReference>
<dbReference type="FunFam" id="3.10.20.80:FF:000001">
    <property type="entry name" value="Translation initiation factor IF-3"/>
    <property type="match status" value="1"/>
</dbReference>
<dbReference type="FunFam" id="3.30.110.10:FF:000001">
    <property type="entry name" value="Translation initiation factor IF-3"/>
    <property type="match status" value="1"/>
</dbReference>
<dbReference type="Gene3D" id="3.30.110.10">
    <property type="entry name" value="Translation initiation factor 3 (IF-3), C-terminal domain"/>
    <property type="match status" value="1"/>
</dbReference>
<dbReference type="Gene3D" id="3.10.20.80">
    <property type="entry name" value="Translation initiation factor 3 (IF-3), N-terminal domain"/>
    <property type="match status" value="1"/>
</dbReference>
<dbReference type="HAMAP" id="MF_00080">
    <property type="entry name" value="IF_3"/>
    <property type="match status" value="1"/>
</dbReference>
<dbReference type="InterPro" id="IPR036788">
    <property type="entry name" value="T_IF-3_C_sf"/>
</dbReference>
<dbReference type="InterPro" id="IPR036787">
    <property type="entry name" value="T_IF-3_N_sf"/>
</dbReference>
<dbReference type="InterPro" id="IPR019813">
    <property type="entry name" value="Translation_initiation_fac3_CS"/>
</dbReference>
<dbReference type="InterPro" id="IPR001288">
    <property type="entry name" value="Translation_initiation_fac_3"/>
</dbReference>
<dbReference type="InterPro" id="IPR019815">
    <property type="entry name" value="Translation_initiation_fac_3_C"/>
</dbReference>
<dbReference type="InterPro" id="IPR019814">
    <property type="entry name" value="Translation_initiation_fac_3_N"/>
</dbReference>
<dbReference type="NCBIfam" id="TIGR00168">
    <property type="entry name" value="infC"/>
    <property type="match status" value="1"/>
</dbReference>
<dbReference type="PANTHER" id="PTHR10938">
    <property type="entry name" value="TRANSLATION INITIATION FACTOR IF-3"/>
    <property type="match status" value="1"/>
</dbReference>
<dbReference type="PANTHER" id="PTHR10938:SF0">
    <property type="entry name" value="TRANSLATION INITIATION FACTOR IF-3, MITOCHONDRIAL"/>
    <property type="match status" value="1"/>
</dbReference>
<dbReference type="Pfam" id="PF00707">
    <property type="entry name" value="IF3_C"/>
    <property type="match status" value="1"/>
</dbReference>
<dbReference type="Pfam" id="PF05198">
    <property type="entry name" value="IF3_N"/>
    <property type="match status" value="1"/>
</dbReference>
<dbReference type="SUPFAM" id="SSF55200">
    <property type="entry name" value="Translation initiation factor IF3, C-terminal domain"/>
    <property type="match status" value="1"/>
</dbReference>
<dbReference type="SUPFAM" id="SSF54364">
    <property type="entry name" value="Translation initiation factor IF3, N-terminal domain"/>
    <property type="match status" value="1"/>
</dbReference>
<dbReference type="PROSITE" id="PS00938">
    <property type="entry name" value="IF3"/>
    <property type="match status" value="1"/>
</dbReference>
<comment type="function">
    <text evidence="1">IF-3 binds to the 30S ribosomal subunit and shifts the equilibrium between 70S ribosomes and their 50S and 30S subunits in favor of the free subunits, thus enhancing the availability of 30S subunits on which protein synthesis initiation begins.</text>
</comment>
<comment type="subunit">
    <text evidence="1">Monomer.</text>
</comment>
<comment type="subcellular location">
    <subcellularLocation>
        <location evidence="1">Cytoplasm</location>
    </subcellularLocation>
</comment>
<comment type="similarity">
    <text evidence="1">Belongs to the IF-3 family.</text>
</comment>
<gene>
    <name evidence="1" type="primary">infC</name>
    <name type="ordered locus">AZC_4444</name>
</gene>